<feature type="chain" id="PRO_0000081950" description="Probable splicing factor, arginine/serine-rich 3">
    <location>
        <begin position="1"/>
        <end position="258"/>
    </location>
</feature>
<feature type="domain" description="RRM 1" evidence="3">
    <location>
        <begin position="9"/>
        <end position="83"/>
    </location>
</feature>
<feature type="domain" description="RRM 2" evidence="3">
    <location>
        <begin position="123"/>
        <end position="197"/>
    </location>
</feature>
<feature type="region of interest" description="Disordered" evidence="4">
    <location>
        <begin position="81"/>
        <end position="120"/>
    </location>
</feature>
<feature type="region of interest" description="Disordered" evidence="4">
    <location>
        <begin position="190"/>
        <end position="258"/>
    </location>
</feature>
<feature type="compositionally biased region" description="Basic and acidic residues" evidence="4">
    <location>
        <begin position="97"/>
        <end position="107"/>
    </location>
</feature>
<feature type="compositionally biased region" description="Gly residues" evidence="4">
    <location>
        <begin position="108"/>
        <end position="117"/>
    </location>
</feature>
<feature type="compositionally biased region" description="Basic and acidic residues" evidence="4">
    <location>
        <begin position="208"/>
        <end position="223"/>
    </location>
</feature>
<feature type="compositionally biased region" description="Basic residues" evidence="4">
    <location>
        <begin position="228"/>
        <end position="246"/>
    </location>
</feature>
<feature type="compositionally biased region" description="Low complexity" evidence="4">
    <location>
        <begin position="247"/>
        <end position="258"/>
    </location>
</feature>
<feature type="sequence conflict" description="In Ref. 1; AAG36874." evidence="7" ref="1">
    <original>G</original>
    <variation>S</variation>
    <location>
        <position position="90"/>
    </location>
</feature>
<comment type="function">
    <text evidence="5 6">Plays an essential role in embryogenesis.</text>
</comment>
<comment type="subunit">
    <text evidence="6">Interacts with spk-1.</text>
</comment>
<comment type="subcellular location">
    <subcellularLocation>
        <location evidence="1">Nucleus</location>
    </subcellularLocation>
</comment>
<comment type="tissue specificity">
    <text evidence="6">Predominantly coexpressed with spk-1 in adult hermaphrodite germlines.</text>
</comment>
<comment type="PTM">
    <text evidence="6">Directly phosphorylated by spk-1 in vitro on serine residues of the RS domain.</text>
</comment>
<comment type="similarity">
    <text evidence="2">Belongs to the splicing factor SR family.</text>
</comment>
<name>RSP3_CAEEL</name>
<evidence type="ECO:0000250" key="1"/>
<evidence type="ECO:0000255" key="2"/>
<evidence type="ECO:0000255" key="3">
    <source>
        <dbReference type="PROSITE-ProRule" id="PRU00176"/>
    </source>
</evidence>
<evidence type="ECO:0000256" key="4">
    <source>
        <dbReference type="SAM" id="MobiDB-lite"/>
    </source>
</evidence>
<evidence type="ECO:0000269" key="5">
    <source>
    </source>
</evidence>
<evidence type="ECO:0000269" key="6">
    <source>
    </source>
</evidence>
<evidence type="ECO:0000305" key="7"/>
<evidence type="ECO:0000312" key="8">
    <source>
        <dbReference type="EMBL" id="AAG36874.1"/>
    </source>
</evidence>
<evidence type="ECO:0000312" key="9">
    <source>
        <dbReference type="EMBL" id="CAC35847.2"/>
    </source>
</evidence>
<protein>
    <recommendedName>
        <fullName>Probable splicing factor, arginine/serine-rich 3</fullName>
    </recommendedName>
    <alternativeName>
        <fullName>CeSF2</fullName>
    </alternativeName>
    <alternativeName>
        <fullName>CeSF2/ASF</fullName>
    </alternativeName>
</protein>
<reference evidence="7 8" key="1">
    <citation type="journal article" date="2000" name="Mech. Dev.">
        <title>SPK-1, a C. elegans SR protein kinase homologue, is essential for embryogenesis and required for germline development.</title>
        <authorList>
            <person name="Kuroyanagi H."/>
            <person name="Kimura T."/>
            <person name="Wada K."/>
            <person name="Hisamoto N."/>
            <person name="Matsumoto K."/>
            <person name="Hagiwara M."/>
        </authorList>
    </citation>
    <scope>NUCLEOTIDE SEQUENCE [MRNA]</scope>
    <scope>FUNCTION</scope>
    <scope>PHOSPHORYLATION OF RS DOMAIN</scope>
    <scope>TISSUE SPECIFICITY</scope>
</reference>
<reference evidence="9" key="2">
    <citation type="journal article" date="1998" name="Science">
        <title>Genome sequence of the nematode C. elegans: a platform for investigating biology.</title>
        <authorList>
            <consortium name="The C. elegans sequencing consortium"/>
        </authorList>
    </citation>
    <scope>NUCLEOTIDE SEQUENCE [LARGE SCALE GENOMIC DNA]</scope>
    <source>
        <strain evidence="9">Bristol N2</strain>
    </source>
</reference>
<reference evidence="7" key="3">
    <citation type="journal article" date="2000" name="EMBO J.">
        <title>Functional characterization of SR and SR-related genes in Caenorhabditis elegans.</title>
        <authorList>
            <person name="Longman D."/>
            <person name="Johnstone I.L."/>
            <person name="Caceres J.F."/>
        </authorList>
    </citation>
    <scope>IDENTIFICATION</scope>
    <scope>FUNCTION</scope>
</reference>
<gene>
    <name type="primary">rsp-3</name>
    <name type="ORF">Y111B2A.18</name>
</gene>
<dbReference type="EMBL" id="AF242767">
    <property type="protein sequence ID" value="AAG36874.1"/>
    <property type="molecule type" value="mRNA"/>
</dbReference>
<dbReference type="EMBL" id="AL132904">
    <property type="protein sequence ID" value="CAC35847.2"/>
    <property type="molecule type" value="Genomic_DNA"/>
</dbReference>
<dbReference type="RefSeq" id="NP_001370111.1">
    <property type="nucleotide sequence ID" value="NM_001383015.1"/>
</dbReference>
<dbReference type="RefSeq" id="NP_499649.2">
    <property type="nucleotide sequence ID" value="NM_067248.4"/>
</dbReference>
<dbReference type="SMR" id="Q9NEW6"/>
<dbReference type="BioGRID" id="41865">
    <property type="interactions" value="41"/>
</dbReference>
<dbReference type="FunCoup" id="Q9NEW6">
    <property type="interactions" value="3031"/>
</dbReference>
<dbReference type="STRING" id="6239.Y111B2A.18.3"/>
<dbReference type="iPTMnet" id="Q9NEW6"/>
<dbReference type="PaxDb" id="6239-Y111B2A.18.1"/>
<dbReference type="PeptideAtlas" id="Q9NEW6"/>
<dbReference type="EnsemblMetazoa" id="Y111B2A.18.1">
    <property type="protein sequence ID" value="Y111B2A.18.1"/>
    <property type="gene ID" value="WBGene00004700"/>
</dbReference>
<dbReference type="EnsemblMetazoa" id="Y111B2A.18.2">
    <property type="protein sequence ID" value="Y111B2A.18.2"/>
    <property type="gene ID" value="WBGene00004700"/>
</dbReference>
<dbReference type="GeneID" id="176688"/>
<dbReference type="UCSC" id="Y111B2A.18.1">
    <property type="organism name" value="c. elegans"/>
</dbReference>
<dbReference type="AGR" id="WB:WBGene00004700"/>
<dbReference type="WormBase" id="Y111B2A.18">
    <property type="protein sequence ID" value="CE31089"/>
    <property type="gene ID" value="WBGene00004700"/>
    <property type="gene designation" value="rsp-3"/>
</dbReference>
<dbReference type="eggNOG" id="KOG0105">
    <property type="taxonomic scope" value="Eukaryota"/>
</dbReference>
<dbReference type="GeneTree" id="ENSGT00940000164330"/>
<dbReference type="HOGENOM" id="CLU_012062_34_0_1"/>
<dbReference type="InParanoid" id="Q9NEW6"/>
<dbReference type="OMA" id="KMDGNRS"/>
<dbReference type="OrthoDB" id="1099063at2759"/>
<dbReference type="PhylomeDB" id="Q9NEW6"/>
<dbReference type="Reactome" id="R-CEL-159236">
    <property type="pathway name" value="Transport of Mature mRNA derived from an Intron-Containing Transcript"/>
</dbReference>
<dbReference type="Reactome" id="R-CEL-72163">
    <property type="pathway name" value="mRNA Splicing - Major Pathway"/>
</dbReference>
<dbReference type="Reactome" id="R-CEL-72165">
    <property type="pathway name" value="mRNA Splicing - Minor Pathway"/>
</dbReference>
<dbReference type="Reactome" id="R-CEL-72187">
    <property type="pathway name" value="mRNA 3'-end processing"/>
</dbReference>
<dbReference type="Reactome" id="R-CEL-72203">
    <property type="pathway name" value="Processing of Capped Intron-Containing Pre-mRNA"/>
</dbReference>
<dbReference type="Reactome" id="R-CEL-73856">
    <property type="pathway name" value="RNA Polymerase II Transcription Termination"/>
</dbReference>
<dbReference type="PRO" id="PR:Q9NEW6"/>
<dbReference type="Proteomes" id="UP000001940">
    <property type="component" value="Chromosome III"/>
</dbReference>
<dbReference type="Bgee" id="WBGene00004700">
    <property type="expression patterns" value="Expressed in embryo and 5 other cell types or tissues"/>
</dbReference>
<dbReference type="GO" id="GO:0016607">
    <property type="term" value="C:nuclear speck"/>
    <property type="evidence" value="ECO:0000318"/>
    <property type="project" value="GO_Central"/>
</dbReference>
<dbReference type="GO" id="GO:0003723">
    <property type="term" value="F:RNA binding"/>
    <property type="evidence" value="ECO:0000250"/>
    <property type="project" value="WormBase"/>
</dbReference>
<dbReference type="GO" id="GO:0000380">
    <property type="term" value="P:alternative mRNA splicing, via spliceosome"/>
    <property type="evidence" value="ECO:0000318"/>
    <property type="project" value="GO_Central"/>
</dbReference>
<dbReference type="GO" id="GO:0009792">
    <property type="term" value="P:embryo development ending in birth or egg hatching"/>
    <property type="evidence" value="ECO:0000315"/>
    <property type="project" value="UniProtKB"/>
</dbReference>
<dbReference type="GO" id="GO:0006376">
    <property type="term" value="P:mRNA splice site recognition"/>
    <property type="evidence" value="ECO:0000250"/>
    <property type="project" value="WormBase"/>
</dbReference>
<dbReference type="GO" id="GO:0008380">
    <property type="term" value="P:RNA splicing"/>
    <property type="evidence" value="ECO:0000303"/>
    <property type="project" value="UniProtKB"/>
</dbReference>
<dbReference type="CDD" id="cd12338">
    <property type="entry name" value="RRM1_SRSF1_like"/>
    <property type="match status" value="1"/>
</dbReference>
<dbReference type="CDD" id="cd12601">
    <property type="entry name" value="RRM2_SRSF1_like"/>
    <property type="match status" value="1"/>
</dbReference>
<dbReference type="FunFam" id="3.30.70.330:FF:000053">
    <property type="entry name" value="Serine/arginine-rich splicing factor 1"/>
    <property type="match status" value="1"/>
</dbReference>
<dbReference type="FunFam" id="3.30.70.330:FF:000815">
    <property type="entry name" value="Serine/arginine-rich splicing factor SR30"/>
    <property type="match status" value="1"/>
</dbReference>
<dbReference type="Gene3D" id="3.30.70.330">
    <property type="match status" value="2"/>
</dbReference>
<dbReference type="InterPro" id="IPR012677">
    <property type="entry name" value="Nucleotide-bd_a/b_plait_sf"/>
</dbReference>
<dbReference type="InterPro" id="IPR035979">
    <property type="entry name" value="RBD_domain_sf"/>
</dbReference>
<dbReference type="InterPro" id="IPR000504">
    <property type="entry name" value="RRM_dom"/>
</dbReference>
<dbReference type="InterPro" id="IPR050374">
    <property type="entry name" value="RRT5_SRSF_SR"/>
</dbReference>
<dbReference type="PANTHER" id="PTHR23003">
    <property type="entry name" value="RNA RECOGNITION MOTIF RRM DOMAIN CONTAINING PROTEIN"/>
    <property type="match status" value="1"/>
</dbReference>
<dbReference type="PANTHER" id="PTHR23003:SF62">
    <property type="entry name" value="SERINE_ARGININE (SR)-TYPE SHUTTLING MRNA BINDING PROTEIN NPL3"/>
    <property type="match status" value="1"/>
</dbReference>
<dbReference type="Pfam" id="PF00076">
    <property type="entry name" value="RRM_1"/>
    <property type="match status" value="2"/>
</dbReference>
<dbReference type="SMART" id="SM00360">
    <property type="entry name" value="RRM"/>
    <property type="match status" value="2"/>
</dbReference>
<dbReference type="SUPFAM" id="SSF54928">
    <property type="entry name" value="RNA-binding domain, RBD"/>
    <property type="match status" value="1"/>
</dbReference>
<dbReference type="PROSITE" id="PS50102">
    <property type="entry name" value="RRM"/>
    <property type="match status" value="2"/>
</dbReference>
<keyword id="KW-0217">Developmental protein</keyword>
<keyword id="KW-0507">mRNA processing</keyword>
<keyword id="KW-0508">mRNA splicing</keyword>
<keyword id="KW-0539">Nucleus</keyword>
<keyword id="KW-0597">Phosphoprotein</keyword>
<keyword id="KW-1185">Reference proteome</keyword>
<keyword id="KW-0677">Repeat</keyword>
<keyword id="KW-0694">RNA-binding</keyword>
<accession>Q9NEW6</accession>
<accession>Q9GQI7</accession>
<sequence>MPRGGSEDQKVYVGNLPGDVREKEVEDIFHKYGRIKYVDIKSGRGPAFAFVEFEDHRDAEDAVRARDGYEFDGRRIRVEFTRGVGPRGPGGRPLQDGGDHRGGDFRGGRGGGRGGGPQRRTGYRVIVEGLPPTGSWQDLKDHMRDAGDVCYADVARDGTGVVEFTRYEDVKYAVRKLDDTKFRSHEGETAYIRVREDNSSGGGSGGGGRDRSRSRSPRAERRASPKYSPRRSRSRSRSRSRSRSRSASRSPSRSPSPQ</sequence>
<organism>
    <name type="scientific">Caenorhabditis elegans</name>
    <dbReference type="NCBI Taxonomy" id="6239"/>
    <lineage>
        <taxon>Eukaryota</taxon>
        <taxon>Metazoa</taxon>
        <taxon>Ecdysozoa</taxon>
        <taxon>Nematoda</taxon>
        <taxon>Chromadorea</taxon>
        <taxon>Rhabditida</taxon>
        <taxon>Rhabditina</taxon>
        <taxon>Rhabditomorpha</taxon>
        <taxon>Rhabditoidea</taxon>
        <taxon>Rhabditidae</taxon>
        <taxon>Peloderinae</taxon>
        <taxon>Caenorhabditis</taxon>
    </lineage>
</organism>
<proteinExistence type="evidence at protein level"/>